<name>FSTL3_HUMAN</name>
<comment type="function">
    <text evidence="5 8 9 11 12 13">Isoform 1 or the secreted form is a binding and antagonizing protein for members of the TGF-beta family, such as activin, BMP2 and MSTN. Inhibits activin A-, activin B-, BMP2- and MSDT-induced cellular signaling; more effective on activin A than on activin B. Involved in bone formation; inhibits osteoclast differentiation. Involved in hematopoiesis; involved in differentiation of hemopoietic progenitor cells, increases hematopoietic cell adhesion to fibronectin and seems to contribute to the adhesion of hematopoietic precursor cells to the bone marrow stroma. Isoform 2 or the nuclear form is probably involved in transcriptional regulation via interaction with MLLT10.</text>
</comment>
<comment type="subunit">
    <text evidence="6 9 11 12 13 14 15">Interacts with INHBA and INHBB. Interacts with FN1. Interacts with ADAM12. Isoform 2 interacts with MLLT10; the interaction enhances MLLT10 in vitro transcriptional activity and self-association. Interacts with MSTN.</text>
</comment>
<comment type="interaction">
    <interactant intactId="EBI-2625790">
        <id>O95633</id>
    </interactant>
    <interactant intactId="EBI-2625865">
        <id>O43184-2</id>
        <label>ADAM12</label>
    </interactant>
    <organismsDiffer>false</organismsDiffer>
    <experiments>4</experiments>
</comment>
<comment type="subcellular location">
    <molecule>Isoform 1</molecule>
    <subcellularLocation>
        <location>Secreted</location>
    </subcellularLocation>
</comment>
<comment type="subcellular location">
    <molecule>Isoform 2</molecule>
    <subcellularLocation>
        <location>Nucleus</location>
    </subcellularLocation>
    <text evidence="10">Although alternative initiation has been demonstrated and resulted in different localization, the major source of nuclear FSTL3 appears not to depend on translation initiation at Met-27 according to.</text>
</comment>
<comment type="alternative products">
    <event type="alternative initiation"/>
    <isoform>
        <id>O95633-1</id>
        <name>1</name>
        <sequence type="displayed"/>
    </isoform>
    <isoform>
        <id>O95633-2</id>
        <name>2</name>
        <sequence type="described" ref="VSP_038553"/>
    </isoform>
</comment>
<comment type="tissue specificity">
    <text evidence="4">Expressed in a wide range of tissues.</text>
</comment>
<comment type="disease">
    <text evidence="17">A chromosomal aberration involving FSTL3 is found in a case of B-cell chronic lymphocytic leukemia. Translocation t(11;19)(q13;p13) with CCDN1.</text>
</comment>
<comment type="online information" name="Atlas of Genetics and Cytogenetics in Oncology and Haematology">
    <link uri="https://atlasgeneticsoncology.org/gene/111/FSTL3"/>
</comment>
<organism>
    <name type="scientific">Homo sapiens</name>
    <name type="common">Human</name>
    <dbReference type="NCBI Taxonomy" id="9606"/>
    <lineage>
        <taxon>Eukaryota</taxon>
        <taxon>Metazoa</taxon>
        <taxon>Chordata</taxon>
        <taxon>Craniata</taxon>
        <taxon>Vertebrata</taxon>
        <taxon>Euteleostomi</taxon>
        <taxon>Mammalia</taxon>
        <taxon>Eutheria</taxon>
        <taxon>Euarchontoglires</taxon>
        <taxon>Primates</taxon>
        <taxon>Haplorrhini</taxon>
        <taxon>Catarrhini</taxon>
        <taxon>Hominidae</taxon>
        <taxon>Homo</taxon>
    </lineage>
</organism>
<feature type="signal peptide" evidence="7">
    <location>
        <begin position="1"/>
        <end position="26"/>
    </location>
</feature>
<feature type="chain" id="PRO_0000010115" description="Follistatin-related protein 3">
    <location>
        <begin position="27"/>
        <end position="263"/>
    </location>
</feature>
<feature type="domain" description="TB" evidence="1">
    <location>
        <begin position="36"/>
        <end position="107"/>
    </location>
</feature>
<feature type="domain" description="Follistatin-like 1">
    <location>
        <begin position="99"/>
        <end position="119"/>
    </location>
</feature>
<feature type="domain" description="Kazal-like 1" evidence="2">
    <location>
        <begin position="113"/>
        <end position="169"/>
    </location>
</feature>
<feature type="domain" description="Follistatin-like 2">
    <location>
        <begin position="170"/>
        <end position="193"/>
    </location>
</feature>
<feature type="domain" description="Kazal-like 2" evidence="2">
    <location>
        <begin position="189"/>
        <end position="245"/>
    </location>
</feature>
<feature type="region of interest" description="Disordered" evidence="3">
    <location>
        <begin position="242"/>
        <end position="263"/>
    </location>
</feature>
<feature type="modified residue" description="Phosphoserine; by FAM20C" evidence="16">
    <location>
        <position position="255"/>
    </location>
</feature>
<feature type="glycosylation site" description="N-linked (GlcNAc...) asparagine" evidence="15">
    <location>
        <position position="73"/>
    </location>
</feature>
<feature type="glycosylation site" description="N-linked (GlcNAc...) asparagine" evidence="14">
    <location>
        <position position="215"/>
    </location>
</feature>
<feature type="disulfide bond" evidence="1">
    <location>
        <begin position="38"/>
        <end position="61"/>
    </location>
</feature>
<feature type="disulfide bond" evidence="1">
    <location>
        <begin position="48"/>
        <end position="92"/>
    </location>
</feature>
<feature type="disulfide bond" evidence="1">
    <location>
        <begin position="62"/>
        <end position="95"/>
    </location>
</feature>
<feature type="disulfide bond">
    <location>
        <begin position="99"/>
        <end position="110"/>
    </location>
</feature>
<feature type="disulfide bond">
    <location>
        <begin position="104"/>
        <end position="119"/>
    </location>
</feature>
<feature type="disulfide bond">
    <location>
        <begin position="121"/>
        <end position="153"/>
    </location>
</feature>
<feature type="disulfide bond">
    <location>
        <begin position="125"/>
        <end position="146"/>
    </location>
</feature>
<feature type="disulfide bond">
    <location>
        <begin position="135"/>
        <end position="167"/>
    </location>
</feature>
<feature type="disulfide bond">
    <location>
        <begin position="171"/>
        <end position="182"/>
    </location>
</feature>
<feature type="disulfide bond">
    <location>
        <begin position="176"/>
        <end position="192"/>
    </location>
</feature>
<feature type="disulfide bond">
    <location>
        <begin position="195"/>
        <end position="229"/>
    </location>
</feature>
<feature type="disulfide bond">
    <location>
        <begin position="200"/>
        <end position="222"/>
    </location>
</feature>
<feature type="disulfide bond">
    <location>
        <begin position="211"/>
        <end position="243"/>
    </location>
</feature>
<feature type="splice variant" id="VSP_038553" description="In isoform 2." evidence="18">
    <location>
        <begin position="1"/>
        <end position="26"/>
    </location>
</feature>
<feature type="mutagenesis site" description="Nuclear localization." evidence="10">
    <original>M</original>
    <variation>A</variation>
    <location>
        <position position="27"/>
    </location>
</feature>
<feature type="strand" evidence="20">
    <location>
        <begin position="37"/>
        <end position="40"/>
    </location>
</feature>
<feature type="strand" evidence="20">
    <location>
        <begin position="50"/>
        <end position="55"/>
    </location>
</feature>
<feature type="helix" evidence="20">
    <location>
        <begin position="58"/>
        <end position="62"/>
    </location>
</feature>
<feature type="strand" evidence="20">
    <location>
        <begin position="67"/>
        <end position="72"/>
    </location>
</feature>
<feature type="helix" evidence="20">
    <location>
        <begin position="81"/>
        <end position="86"/>
    </location>
</feature>
<feature type="strand" evidence="20">
    <location>
        <begin position="93"/>
        <end position="95"/>
    </location>
</feature>
<feature type="strand" evidence="20">
    <location>
        <begin position="97"/>
        <end position="99"/>
    </location>
</feature>
<feature type="strand" evidence="20">
    <location>
        <begin position="108"/>
        <end position="111"/>
    </location>
</feature>
<feature type="strand" evidence="19">
    <location>
        <begin position="113"/>
        <end position="116"/>
    </location>
</feature>
<feature type="strand" evidence="20">
    <location>
        <begin position="118"/>
        <end position="121"/>
    </location>
</feature>
<feature type="strand" evidence="20">
    <location>
        <begin position="126"/>
        <end position="128"/>
    </location>
</feature>
<feature type="strand" evidence="20">
    <location>
        <begin position="134"/>
        <end position="136"/>
    </location>
</feature>
<feature type="strand" evidence="20">
    <location>
        <begin position="141"/>
        <end position="144"/>
    </location>
</feature>
<feature type="helix" evidence="20">
    <location>
        <begin position="145"/>
        <end position="153"/>
    </location>
</feature>
<feature type="strand" evidence="20">
    <location>
        <begin position="161"/>
        <end position="166"/>
    </location>
</feature>
<feature type="strand" evidence="20">
    <location>
        <begin position="169"/>
        <end position="171"/>
    </location>
</feature>
<feature type="strand" evidence="20">
    <location>
        <begin position="181"/>
        <end position="184"/>
    </location>
</feature>
<feature type="strand" evidence="20">
    <location>
        <begin position="190"/>
        <end position="193"/>
    </location>
</feature>
<feature type="strand" evidence="20">
    <location>
        <begin position="204"/>
        <end position="207"/>
    </location>
</feature>
<feature type="strand" evidence="20">
    <location>
        <begin position="210"/>
        <end position="212"/>
    </location>
</feature>
<feature type="strand" evidence="20">
    <location>
        <begin position="217"/>
        <end position="220"/>
    </location>
</feature>
<feature type="helix" evidence="20">
    <location>
        <begin position="221"/>
        <end position="231"/>
    </location>
</feature>
<feature type="strand" evidence="20">
    <location>
        <begin position="237"/>
        <end position="241"/>
    </location>
</feature>
<keyword id="KW-0002">3D-structure</keyword>
<keyword id="KW-0024">Alternative initiation</keyword>
<keyword id="KW-0160">Chromosomal rearrangement</keyword>
<keyword id="KW-0903">Direct protein sequencing</keyword>
<keyword id="KW-1015">Disulfide bond</keyword>
<keyword id="KW-0325">Glycoprotein</keyword>
<keyword id="KW-0539">Nucleus</keyword>
<keyword id="KW-0892">Osteogenesis</keyword>
<keyword id="KW-0597">Phosphoprotein</keyword>
<keyword id="KW-1267">Proteomics identification</keyword>
<keyword id="KW-0656">Proto-oncogene</keyword>
<keyword id="KW-1185">Reference proteome</keyword>
<keyword id="KW-0677">Repeat</keyword>
<keyword id="KW-0964">Secreted</keyword>
<keyword id="KW-0732">Signal</keyword>
<keyword id="KW-0804">Transcription</keyword>
<keyword id="KW-0805">Transcription regulation</keyword>
<accession>O95633</accession>
<accession>A8K7E3</accession>
<proteinExistence type="evidence at protein level"/>
<sequence length="263" mass="27663">MRPGAPGPLWPLPWGALAWAVGFVSSMGSGNPAPGGVCWLQQGQEATCSLVLQTDVTRAECCASGNIDTAWSNLTHPGNKINLLGFLGLVHCLPCKDSCDGVECGPGKACRMLGGRPRCECAPDCSGLPARLQVCGSDGATYRDECELRAARCRGHPDLSVMYRGRCRKSCEHVVCPRPQSCVVDQTGSAHCVVCRAAPCPVPSSPGQELCGNNNVTYISSCHMRQATCFLGRSIGVRHAGSCAGTPEEPPGGESAEEEENFV</sequence>
<evidence type="ECO:0000255" key="1">
    <source>
        <dbReference type="PROSITE-ProRule" id="PRU00697"/>
    </source>
</evidence>
<evidence type="ECO:0000255" key="2">
    <source>
        <dbReference type="PROSITE-ProRule" id="PRU00798"/>
    </source>
</evidence>
<evidence type="ECO:0000256" key="3">
    <source>
        <dbReference type="SAM" id="MobiDB-lite"/>
    </source>
</evidence>
<evidence type="ECO:0000269" key="4">
    <source>
    </source>
</evidence>
<evidence type="ECO:0000269" key="5">
    <source>
    </source>
</evidence>
<evidence type="ECO:0000269" key="6">
    <source>
    </source>
</evidence>
<evidence type="ECO:0000269" key="7">
    <source>
    </source>
</evidence>
<evidence type="ECO:0000269" key="8">
    <source>
    </source>
</evidence>
<evidence type="ECO:0000269" key="9">
    <source>
    </source>
</evidence>
<evidence type="ECO:0000269" key="10">
    <source>
    </source>
</evidence>
<evidence type="ECO:0000269" key="11">
    <source>
    </source>
</evidence>
<evidence type="ECO:0000269" key="12">
    <source>
    </source>
</evidence>
<evidence type="ECO:0000269" key="13">
    <source>
    </source>
</evidence>
<evidence type="ECO:0000269" key="14">
    <source>
    </source>
</evidence>
<evidence type="ECO:0000269" key="15">
    <source>
    </source>
</evidence>
<evidence type="ECO:0000269" key="16">
    <source>
    </source>
</evidence>
<evidence type="ECO:0000269" key="17">
    <source>
    </source>
</evidence>
<evidence type="ECO:0000305" key="18"/>
<evidence type="ECO:0007829" key="19">
    <source>
        <dbReference type="PDB" id="3B4V"/>
    </source>
</evidence>
<evidence type="ECO:0007829" key="20">
    <source>
        <dbReference type="PDB" id="3SEK"/>
    </source>
</evidence>
<gene>
    <name type="primary">FSTL3</name>
    <name type="synonym">FLRG</name>
    <name type="ORF">UNQ674/PRO1308</name>
</gene>
<dbReference type="EMBL" id="U76702">
    <property type="protein sequence ID" value="AAC64321.1"/>
    <property type="molecule type" value="mRNA"/>
</dbReference>
<dbReference type="EMBL" id="AY358917">
    <property type="protein sequence ID" value="AAQ89276.1"/>
    <property type="molecule type" value="mRNA"/>
</dbReference>
<dbReference type="EMBL" id="AK291958">
    <property type="protein sequence ID" value="BAF84647.1"/>
    <property type="molecule type" value="mRNA"/>
</dbReference>
<dbReference type="EMBL" id="CH471242">
    <property type="protein sequence ID" value="EAW61165.1"/>
    <property type="molecule type" value="Genomic_DNA"/>
</dbReference>
<dbReference type="EMBL" id="BC005839">
    <property type="protein sequence ID" value="AAH05839.1"/>
    <property type="molecule type" value="mRNA"/>
</dbReference>
<dbReference type="CCDS" id="CCDS12040.1">
    <molecule id="O95633-1"/>
</dbReference>
<dbReference type="RefSeq" id="NP_005851.1">
    <molecule id="O95633-1"/>
    <property type="nucleotide sequence ID" value="NM_005860.3"/>
</dbReference>
<dbReference type="PDB" id="2KCX">
    <property type="method" value="NMR"/>
    <property type="chains" value="A=97-169"/>
</dbReference>
<dbReference type="PDB" id="3B4V">
    <property type="method" value="X-ray"/>
    <property type="resolution" value="2.48 A"/>
    <property type="chains" value="C/D/G/H=27-263"/>
</dbReference>
<dbReference type="PDB" id="3SEK">
    <property type="method" value="X-ray"/>
    <property type="resolution" value="2.40 A"/>
    <property type="chains" value="C=36-244"/>
</dbReference>
<dbReference type="PDBsum" id="2KCX"/>
<dbReference type="PDBsum" id="3B4V"/>
<dbReference type="PDBsum" id="3SEK"/>
<dbReference type="BMRB" id="O95633"/>
<dbReference type="SMR" id="O95633"/>
<dbReference type="BioGRID" id="115562">
    <property type="interactions" value="5"/>
</dbReference>
<dbReference type="CORUM" id="O95633"/>
<dbReference type="FunCoup" id="O95633">
    <property type="interactions" value="131"/>
</dbReference>
<dbReference type="IntAct" id="O95633">
    <property type="interactions" value="2"/>
</dbReference>
<dbReference type="STRING" id="9606.ENSP00000166139"/>
<dbReference type="MEROPS" id="I01.968"/>
<dbReference type="GlyCosmos" id="O95633">
    <property type="glycosylation" value="2 sites, No reported glycans"/>
</dbReference>
<dbReference type="GlyGen" id="O95633">
    <property type="glycosylation" value="3 sites, 2 N-linked glycans (2 sites)"/>
</dbReference>
<dbReference type="iPTMnet" id="O95633"/>
<dbReference type="PhosphoSitePlus" id="O95633"/>
<dbReference type="BioMuta" id="FSTL3"/>
<dbReference type="jPOST" id="O95633"/>
<dbReference type="MassIVE" id="O95633"/>
<dbReference type="PaxDb" id="9606-ENSP00000166139"/>
<dbReference type="PeptideAtlas" id="O95633"/>
<dbReference type="ProteomicsDB" id="50968">
    <molecule id="O95633-1"/>
</dbReference>
<dbReference type="ProteomicsDB" id="50969">
    <molecule id="O95633-2"/>
</dbReference>
<dbReference type="Pumba" id="O95633"/>
<dbReference type="TopDownProteomics" id="O95633-1">
    <molecule id="O95633-1"/>
</dbReference>
<dbReference type="Antibodypedia" id="22353">
    <property type="antibodies" value="240 antibodies from 26 providers"/>
</dbReference>
<dbReference type="DNASU" id="10272"/>
<dbReference type="Ensembl" id="ENST00000166139.9">
    <molecule id="O95633-1"/>
    <property type="protein sequence ID" value="ENSP00000166139.3"/>
    <property type="gene ID" value="ENSG00000070404.10"/>
</dbReference>
<dbReference type="GeneID" id="10272"/>
<dbReference type="KEGG" id="hsa:10272"/>
<dbReference type="MANE-Select" id="ENST00000166139.9">
    <property type="protein sequence ID" value="ENSP00000166139.3"/>
    <property type="RefSeq nucleotide sequence ID" value="NM_005860.3"/>
    <property type="RefSeq protein sequence ID" value="NP_005851.1"/>
</dbReference>
<dbReference type="UCSC" id="uc002lpk.2">
    <molecule id="O95633-1"/>
    <property type="organism name" value="human"/>
</dbReference>
<dbReference type="AGR" id="HGNC:3973"/>
<dbReference type="CTD" id="10272"/>
<dbReference type="DisGeNET" id="10272"/>
<dbReference type="GeneCards" id="FSTL3"/>
<dbReference type="HGNC" id="HGNC:3973">
    <property type="gene designation" value="FSTL3"/>
</dbReference>
<dbReference type="HPA" id="ENSG00000070404">
    <property type="expression patterns" value="Low tissue specificity"/>
</dbReference>
<dbReference type="MIM" id="605343">
    <property type="type" value="gene"/>
</dbReference>
<dbReference type="neXtProt" id="NX_O95633"/>
<dbReference type="OpenTargets" id="ENSG00000070404"/>
<dbReference type="PharmGKB" id="PA28390"/>
<dbReference type="VEuPathDB" id="HostDB:ENSG00000070404"/>
<dbReference type="eggNOG" id="KOG3649">
    <property type="taxonomic scope" value="Eukaryota"/>
</dbReference>
<dbReference type="GeneTree" id="ENSGT00940000161332"/>
<dbReference type="HOGENOM" id="CLU_050745_1_0_1"/>
<dbReference type="InParanoid" id="O95633"/>
<dbReference type="OMA" id="HGGICWL"/>
<dbReference type="OrthoDB" id="6614329at2759"/>
<dbReference type="PAN-GO" id="O95633">
    <property type="GO annotations" value="6 GO annotations based on evolutionary models"/>
</dbReference>
<dbReference type="PhylomeDB" id="O95633"/>
<dbReference type="TreeFam" id="TF106409"/>
<dbReference type="PathwayCommons" id="O95633"/>
<dbReference type="Reactome" id="R-HSA-2473224">
    <property type="pathway name" value="Antagonism of Activin by Follistatin"/>
</dbReference>
<dbReference type="Reactome" id="R-HSA-381426">
    <property type="pathway name" value="Regulation of Insulin-like Growth Factor (IGF) transport and uptake by Insulin-like Growth Factor Binding Proteins (IGFBPs)"/>
</dbReference>
<dbReference type="Reactome" id="R-HSA-8957275">
    <property type="pathway name" value="Post-translational protein phosphorylation"/>
</dbReference>
<dbReference type="SignaLink" id="O95633"/>
<dbReference type="SIGNOR" id="O95633"/>
<dbReference type="BioGRID-ORCS" id="10272">
    <property type="hits" value="15 hits in 1160 CRISPR screens"/>
</dbReference>
<dbReference type="ChiTaRS" id="FSTL3">
    <property type="organism name" value="human"/>
</dbReference>
<dbReference type="EvolutionaryTrace" id="O95633"/>
<dbReference type="GeneWiki" id="FSTL3"/>
<dbReference type="GenomeRNAi" id="10272"/>
<dbReference type="Pharos" id="O95633">
    <property type="development level" value="Tbio"/>
</dbReference>
<dbReference type="PRO" id="PR:O95633"/>
<dbReference type="Proteomes" id="UP000005640">
    <property type="component" value="Chromosome 19"/>
</dbReference>
<dbReference type="RNAct" id="O95633">
    <property type="molecule type" value="protein"/>
</dbReference>
<dbReference type="Bgee" id="ENSG00000070404">
    <property type="expression patterns" value="Expressed in right coronary artery and 119 other cell types or tissues"/>
</dbReference>
<dbReference type="ExpressionAtlas" id="O95633">
    <property type="expression patterns" value="baseline and differential"/>
</dbReference>
<dbReference type="GO" id="GO:0005788">
    <property type="term" value="C:endoplasmic reticulum lumen"/>
    <property type="evidence" value="ECO:0000304"/>
    <property type="project" value="Reactome"/>
</dbReference>
<dbReference type="GO" id="GO:0005576">
    <property type="term" value="C:extracellular region"/>
    <property type="evidence" value="ECO:0000318"/>
    <property type="project" value="GO_Central"/>
</dbReference>
<dbReference type="GO" id="GO:0005615">
    <property type="term" value="C:extracellular space"/>
    <property type="evidence" value="ECO:0000314"/>
    <property type="project" value="UniProtKB"/>
</dbReference>
<dbReference type="GO" id="GO:0005654">
    <property type="term" value="C:nucleoplasm"/>
    <property type="evidence" value="ECO:0000314"/>
    <property type="project" value="HPA"/>
</dbReference>
<dbReference type="GO" id="GO:0005634">
    <property type="term" value="C:nucleus"/>
    <property type="evidence" value="ECO:0000314"/>
    <property type="project" value="UniProtKB"/>
</dbReference>
<dbReference type="GO" id="GO:0048185">
    <property type="term" value="F:activin binding"/>
    <property type="evidence" value="ECO:0000353"/>
    <property type="project" value="UniProtKB"/>
</dbReference>
<dbReference type="GO" id="GO:0001968">
    <property type="term" value="F:fibronectin binding"/>
    <property type="evidence" value="ECO:0000353"/>
    <property type="project" value="UniProtKB"/>
</dbReference>
<dbReference type="GO" id="GO:0030154">
    <property type="term" value="P:cell differentiation"/>
    <property type="evidence" value="ECO:0000318"/>
    <property type="project" value="GO_Central"/>
</dbReference>
<dbReference type="GO" id="GO:0002244">
    <property type="term" value="P:hematopoietic progenitor cell differentiation"/>
    <property type="evidence" value="ECO:0000314"/>
    <property type="project" value="UniProtKB"/>
</dbReference>
<dbReference type="GO" id="GO:0032926">
    <property type="term" value="P:negative regulation of activin receptor signaling pathway"/>
    <property type="evidence" value="ECO:0000314"/>
    <property type="project" value="UniProtKB"/>
</dbReference>
<dbReference type="GO" id="GO:0030514">
    <property type="term" value="P:negative regulation of BMP signaling pathway"/>
    <property type="evidence" value="ECO:0000314"/>
    <property type="project" value="UniProtKB"/>
</dbReference>
<dbReference type="GO" id="GO:0045671">
    <property type="term" value="P:negative regulation of osteoclast differentiation"/>
    <property type="evidence" value="ECO:0000314"/>
    <property type="project" value="UniProtKB"/>
</dbReference>
<dbReference type="GO" id="GO:0090101">
    <property type="term" value="P:negative regulation of transmembrane receptor protein serine/threonine kinase signaling pathway"/>
    <property type="evidence" value="ECO:0000314"/>
    <property type="project" value="UniProtKB"/>
</dbReference>
<dbReference type="GO" id="GO:0001503">
    <property type="term" value="P:ossification"/>
    <property type="evidence" value="ECO:0007669"/>
    <property type="project" value="UniProtKB-KW"/>
</dbReference>
<dbReference type="GO" id="GO:0022409">
    <property type="term" value="P:positive regulation of cell-cell adhesion"/>
    <property type="evidence" value="ECO:0000314"/>
    <property type="project" value="UniProtKB"/>
</dbReference>
<dbReference type="GO" id="GO:0045944">
    <property type="term" value="P:positive regulation of transcription by RNA polymerase II"/>
    <property type="evidence" value="ECO:0000314"/>
    <property type="project" value="UniProtKB"/>
</dbReference>
<dbReference type="GO" id="GO:0030510">
    <property type="term" value="P:regulation of BMP signaling pathway"/>
    <property type="evidence" value="ECO:0000318"/>
    <property type="project" value="GO_Central"/>
</dbReference>
<dbReference type="GO" id="GO:0006357">
    <property type="term" value="P:regulation of transcription by RNA polymerase II"/>
    <property type="evidence" value="ECO:0000314"/>
    <property type="project" value="UniProtKB"/>
</dbReference>
<dbReference type="CDD" id="cd00104">
    <property type="entry name" value="KAZAL_FS"/>
    <property type="match status" value="2"/>
</dbReference>
<dbReference type="FunFam" id="3.30.60.30:FF:000025">
    <property type="entry name" value="Follistatin-related protein 3"/>
    <property type="match status" value="1"/>
</dbReference>
<dbReference type="FunFam" id="3.30.60.30:FF:000028">
    <property type="entry name" value="Follistatin-related protein 3"/>
    <property type="match status" value="1"/>
</dbReference>
<dbReference type="FunFam" id="3.90.290.10:FF:000021">
    <property type="entry name" value="follistatin-related protein 3"/>
    <property type="match status" value="1"/>
</dbReference>
<dbReference type="Gene3D" id="3.30.60.30">
    <property type="match status" value="2"/>
</dbReference>
<dbReference type="Gene3D" id="3.90.290.10">
    <property type="entry name" value="TGF-beta binding (TB) domain"/>
    <property type="match status" value="1"/>
</dbReference>
<dbReference type="IDEAL" id="IID00192"/>
<dbReference type="InterPro" id="IPR003645">
    <property type="entry name" value="Fol_N"/>
</dbReference>
<dbReference type="InterPro" id="IPR015369">
    <property type="entry name" value="Follistatin/Osteonectin_EGF"/>
</dbReference>
<dbReference type="InterPro" id="IPR002350">
    <property type="entry name" value="Kazal_dom"/>
</dbReference>
<dbReference type="InterPro" id="IPR036058">
    <property type="entry name" value="Kazal_dom_sf"/>
</dbReference>
<dbReference type="InterPro" id="IPR050653">
    <property type="entry name" value="Prot_Inhib_GrowthFact_Antg"/>
</dbReference>
<dbReference type="InterPro" id="IPR017878">
    <property type="entry name" value="TB_dom"/>
</dbReference>
<dbReference type="InterPro" id="IPR036773">
    <property type="entry name" value="TB_dom_sf"/>
</dbReference>
<dbReference type="PANTHER" id="PTHR10913">
    <property type="entry name" value="FOLLISTATIN-RELATED"/>
    <property type="match status" value="1"/>
</dbReference>
<dbReference type="PANTHER" id="PTHR10913:SF16">
    <property type="entry name" value="FOLLISTATIN-RELATED PROTEIN 3"/>
    <property type="match status" value="1"/>
</dbReference>
<dbReference type="Pfam" id="PF09289">
    <property type="entry name" value="FOLN"/>
    <property type="match status" value="1"/>
</dbReference>
<dbReference type="Pfam" id="PF21333">
    <property type="entry name" value="FST_N"/>
    <property type="match status" value="1"/>
</dbReference>
<dbReference type="Pfam" id="PF07648">
    <property type="entry name" value="Kazal_2"/>
    <property type="match status" value="2"/>
</dbReference>
<dbReference type="SMART" id="SM00274">
    <property type="entry name" value="FOLN"/>
    <property type="match status" value="2"/>
</dbReference>
<dbReference type="SMART" id="SM00280">
    <property type="entry name" value="KAZAL"/>
    <property type="match status" value="2"/>
</dbReference>
<dbReference type="SUPFAM" id="SSF100895">
    <property type="entry name" value="Kazal-type serine protease inhibitors"/>
    <property type="match status" value="2"/>
</dbReference>
<dbReference type="SUPFAM" id="SSF57581">
    <property type="entry name" value="TB module/8-cys domain"/>
    <property type="match status" value="1"/>
</dbReference>
<dbReference type="PROSITE" id="PS51465">
    <property type="entry name" value="KAZAL_2"/>
    <property type="match status" value="2"/>
</dbReference>
<dbReference type="PROSITE" id="PS51364">
    <property type="entry name" value="TB"/>
    <property type="match status" value="1"/>
</dbReference>
<reference key="1">
    <citation type="journal article" date="1998" name="Oncogene">
        <title>FLRG (follistatin-related gene), a new target of chromosomal rearrangement in malignant blood disorders.</title>
        <authorList>
            <person name="Hayette S."/>
            <person name="Gadoux M."/>
            <person name="Martel S."/>
            <person name="Bertrand S."/>
            <person name="Tigaud I."/>
            <person name="Magaud J.-P."/>
            <person name="Rimokh R."/>
        </authorList>
    </citation>
    <scope>NUCLEOTIDE SEQUENCE [MRNA]</scope>
    <scope>CHROMOSOMAL TRANSLOCATION</scope>
    <source>
        <tissue>Placenta</tissue>
    </source>
</reference>
<reference key="2">
    <citation type="journal article" date="2003" name="Genome Res.">
        <title>The secreted protein discovery initiative (SPDI), a large-scale effort to identify novel human secreted and transmembrane proteins: a bioinformatics assessment.</title>
        <authorList>
            <person name="Clark H.F."/>
            <person name="Gurney A.L."/>
            <person name="Abaya E."/>
            <person name="Baker K."/>
            <person name="Baldwin D.T."/>
            <person name="Brush J."/>
            <person name="Chen J."/>
            <person name="Chow B."/>
            <person name="Chui C."/>
            <person name="Crowley C."/>
            <person name="Currell B."/>
            <person name="Deuel B."/>
            <person name="Dowd P."/>
            <person name="Eaton D."/>
            <person name="Foster J.S."/>
            <person name="Grimaldi C."/>
            <person name="Gu Q."/>
            <person name="Hass P.E."/>
            <person name="Heldens S."/>
            <person name="Huang A."/>
            <person name="Kim H.S."/>
            <person name="Klimowski L."/>
            <person name="Jin Y."/>
            <person name="Johnson S."/>
            <person name="Lee J."/>
            <person name="Lewis L."/>
            <person name="Liao D."/>
            <person name="Mark M.R."/>
            <person name="Robbie E."/>
            <person name="Sanchez C."/>
            <person name="Schoenfeld J."/>
            <person name="Seshagiri S."/>
            <person name="Simmons L."/>
            <person name="Singh J."/>
            <person name="Smith V."/>
            <person name="Stinson J."/>
            <person name="Vagts A."/>
            <person name="Vandlen R.L."/>
            <person name="Watanabe C."/>
            <person name="Wieand D."/>
            <person name="Woods K."/>
            <person name="Xie M.-H."/>
            <person name="Yansura D.G."/>
            <person name="Yi S."/>
            <person name="Yu G."/>
            <person name="Yuan J."/>
            <person name="Zhang M."/>
            <person name="Zhang Z."/>
            <person name="Goddard A.D."/>
            <person name="Wood W.I."/>
            <person name="Godowski P.J."/>
            <person name="Gray A.M."/>
        </authorList>
    </citation>
    <scope>NUCLEOTIDE SEQUENCE [LARGE SCALE MRNA]</scope>
</reference>
<reference key="3">
    <citation type="journal article" date="2004" name="Nat. Genet.">
        <title>Complete sequencing and characterization of 21,243 full-length human cDNAs.</title>
        <authorList>
            <person name="Ota T."/>
            <person name="Suzuki Y."/>
            <person name="Nishikawa T."/>
            <person name="Otsuki T."/>
            <person name="Sugiyama T."/>
            <person name="Irie R."/>
            <person name="Wakamatsu A."/>
            <person name="Hayashi K."/>
            <person name="Sato H."/>
            <person name="Nagai K."/>
            <person name="Kimura K."/>
            <person name="Makita H."/>
            <person name="Sekine M."/>
            <person name="Obayashi M."/>
            <person name="Nishi T."/>
            <person name="Shibahara T."/>
            <person name="Tanaka T."/>
            <person name="Ishii S."/>
            <person name="Yamamoto J."/>
            <person name="Saito K."/>
            <person name="Kawai Y."/>
            <person name="Isono Y."/>
            <person name="Nakamura Y."/>
            <person name="Nagahari K."/>
            <person name="Murakami K."/>
            <person name="Yasuda T."/>
            <person name="Iwayanagi T."/>
            <person name="Wagatsuma M."/>
            <person name="Shiratori A."/>
            <person name="Sudo H."/>
            <person name="Hosoiri T."/>
            <person name="Kaku Y."/>
            <person name="Kodaira H."/>
            <person name="Kondo H."/>
            <person name="Sugawara M."/>
            <person name="Takahashi M."/>
            <person name="Kanda K."/>
            <person name="Yokoi T."/>
            <person name="Furuya T."/>
            <person name="Kikkawa E."/>
            <person name="Omura Y."/>
            <person name="Abe K."/>
            <person name="Kamihara K."/>
            <person name="Katsuta N."/>
            <person name="Sato K."/>
            <person name="Tanikawa M."/>
            <person name="Yamazaki M."/>
            <person name="Ninomiya K."/>
            <person name="Ishibashi T."/>
            <person name="Yamashita H."/>
            <person name="Murakawa K."/>
            <person name="Fujimori K."/>
            <person name="Tanai H."/>
            <person name="Kimata M."/>
            <person name="Watanabe M."/>
            <person name="Hiraoka S."/>
            <person name="Chiba Y."/>
            <person name="Ishida S."/>
            <person name="Ono Y."/>
            <person name="Takiguchi S."/>
            <person name="Watanabe S."/>
            <person name="Yosida M."/>
            <person name="Hotuta T."/>
            <person name="Kusano J."/>
            <person name="Kanehori K."/>
            <person name="Takahashi-Fujii A."/>
            <person name="Hara H."/>
            <person name="Tanase T.-O."/>
            <person name="Nomura Y."/>
            <person name="Togiya S."/>
            <person name="Komai F."/>
            <person name="Hara R."/>
            <person name="Takeuchi K."/>
            <person name="Arita M."/>
            <person name="Imose N."/>
            <person name="Musashino K."/>
            <person name="Yuuki H."/>
            <person name="Oshima A."/>
            <person name="Sasaki N."/>
            <person name="Aotsuka S."/>
            <person name="Yoshikawa Y."/>
            <person name="Matsunawa H."/>
            <person name="Ichihara T."/>
            <person name="Shiohata N."/>
            <person name="Sano S."/>
            <person name="Moriya S."/>
            <person name="Momiyama H."/>
            <person name="Satoh N."/>
            <person name="Takami S."/>
            <person name="Terashima Y."/>
            <person name="Suzuki O."/>
            <person name="Nakagawa S."/>
            <person name="Senoh A."/>
            <person name="Mizoguchi H."/>
            <person name="Goto Y."/>
            <person name="Shimizu F."/>
            <person name="Wakebe H."/>
            <person name="Hishigaki H."/>
            <person name="Watanabe T."/>
            <person name="Sugiyama A."/>
            <person name="Takemoto M."/>
            <person name="Kawakami B."/>
            <person name="Yamazaki M."/>
            <person name="Watanabe K."/>
            <person name="Kumagai A."/>
            <person name="Itakura S."/>
            <person name="Fukuzumi Y."/>
            <person name="Fujimori Y."/>
            <person name="Komiyama M."/>
            <person name="Tashiro H."/>
            <person name="Tanigami A."/>
            <person name="Fujiwara T."/>
            <person name="Ono T."/>
            <person name="Yamada K."/>
            <person name="Fujii Y."/>
            <person name="Ozaki K."/>
            <person name="Hirao M."/>
            <person name="Ohmori Y."/>
            <person name="Kawabata A."/>
            <person name="Hikiji T."/>
            <person name="Kobatake N."/>
            <person name="Inagaki H."/>
            <person name="Ikema Y."/>
            <person name="Okamoto S."/>
            <person name="Okitani R."/>
            <person name="Kawakami T."/>
            <person name="Noguchi S."/>
            <person name="Itoh T."/>
            <person name="Shigeta K."/>
            <person name="Senba T."/>
            <person name="Matsumura K."/>
            <person name="Nakajima Y."/>
            <person name="Mizuno T."/>
            <person name="Morinaga M."/>
            <person name="Sasaki M."/>
            <person name="Togashi T."/>
            <person name="Oyama M."/>
            <person name="Hata H."/>
            <person name="Watanabe M."/>
            <person name="Komatsu T."/>
            <person name="Mizushima-Sugano J."/>
            <person name="Satoh T."/>
            <person name="Shirai Y."/>
            <person name="Takahashi Y."/>
            <person name="Nakagawa K."/>
            <person name="Okumura K."/>
            <person name="Nagase T."/>
            <person name="Nomura N."/>
            <person name="Kikuchi H."/>
            <person name="Masuho Y."/>
            <person name="Yamashita R."/>
            <person name="Nakai K."/>
            <person name="Yada T."/>
            <person name="Nakamura Y."/>
            <person name="Ohara O."/>
            <person name="Isogai T."/>
            <person name="Sugano S."/>
        </authorList>
    </citation>
    <scope>NUCLEOTIDE SEQUENCE [LARGE SCALE MRNA]</scope>
</reference>
<reference key="4">
    <citation type="submission" date="2005-07" db="EMBL/GenBank/DDBJ databases">
        <authorList>
            <person name="Mural R.J."/>
            <person name="Istrail S."/>
            <person name="Sutton G.G."/>
            <person name="Florea L."/>
            <person name="Halpern A.L."/>
            <person name="Mobarry C.M."/>
            <person name="Lippert R."/>
            <person name="Walenz B."/>
            <person name="Shatkay H."/>
            <person name="Dew I."/>
            <person name="Miller J.R."/>
            <person name="Flanigan M.J."/>
            <person name="Edwards N.J."/>
            <person name="Bolanos R."/>
            <person name="Fasulo D."/>
            <person name="Halldorsson B.V."/>
            <person name="Hannenhalli S."/>
            <person name="Turner R."/>
            <person name="Yooseph S."/>
            <person name="Lu F."/>
            <person name="Nusskern D.R."/>
            <person name="Shue B.C."/>
            <person name="Zheng X.H."/>
            <person name="Zhong F."/>
            <person name="Delcher A.L."/>
            <person name="Huson D.H."/>
            <person name="Kravitz S.A."/>
            <person name="Mouchard L."/>
            <person name="Reinert K."/>
            <person name="Remington K.A."/>
            <person name="Clark A.G."/>
            <person name="Waterman M.S."/>
            <person name="Eichler E.E."/>
            <person name="Adams M.D."/>
            <person name="Hunkapiller M.W."/>
            <person name="Myers E.W."/>
            <person name="Venter J.C."/>
        </authorList>
    </citation>
    <scope>NUCLEOTIDE SEQUENCE [LARGE SCALE GENOMIC DNA]</scope>
</reference>
<reference key="5">
    <citation type="journal article" date="2004" name="Genome Res.">
        <title>The status, quality, and expansion of the NIH full-length cDNA project: the Mammalian Gene Collection (MGC).</title>
        <authorList>
            <consortium name="The MGC Project Team"/>
        </authorList>
    </citation>
    <scope>NUCLEOTIDE SEQUENCE [LARGE SCALE MRNA]</scope>
    <source>
        <tissue>Placenta</tissue>
    </source>
</reference>
<reference key="6">
    <citation type="journal article" date="2004" name="Protein Sci.">
        <title>Signal peptide prediction based on analysis of experimentally verified cleavage sites.</title>
        <authorList>
            <person name="Zhang Z."/>
            <person name="Henzel W.J."/>
        </authorList>
    </citation>
    <scope>PROTEIN SEQUENCE OF 27-41</scope>
</reference>
<reference key="7">
    <citation type="journal article" date="2001" name="Endocrinology">
        <title>Human follistatin-related protein: a structural homologue of follistatin with nuclear localization.</title>
        <authorList>
            <person name="Tortoriello D.V."/>
            <person name="Sidis Y."/>
            <person name="Holtzman D.A."/>
            <person name="Holmes W.E."/>
            <person name="Schneyer A.L."/>
        </authorList>
    </citation>
    <scope>TISSUE SPECIFICITY</scope>
    <scope>SUBCELLULAR LOCATION</scope>
</reference>
<reference key="8">
    <citation type="journal article" date="2002" name="Oncogene">
        <title>Transcription activation of FLRG and follistatin by activin A, through Smad proteins, participates in a negative feedback loop to modulate activin A function.</title>
        <authorList>
            <person name="Bartholin L."/>
            <person name="Maguer-Satta V."/>
            <person name="Hayette S."/>
            <person name="Martel S."/>
            <person name="Gadoux M."/>
            <person name="Corbo L."/>
            <person name="Magaud J.P."/>
            <person name="Rimokh R."/>
        </authorList>
    </citation>
    <scope>FUNCTION</scope>
</reference>
<reference key="9">
    <citation type="journal article" date="2003" name="Endocrinology">
        <title>Differential binding and neutralization of activins A and B by follistatin and follistatin like-3 (FSTL-3/FSRP/FLRG).</title>
        <authorList>
            <person name="Schneyer A."/>
            <person name="Schoen A."/>
            <person name="Quigg A."/>
            <person name="Sidis Y."/>
        </authorList>
    </citation>
    <scope>INTERACTION WITH INHBA AND INHBB</scope>
</reference>
<reference key="10">
    <citation type="journal article" date="2003" name="J. Clin. Endocrinol. Metab.">
        <title>Follistatin-related gene (FLRG) expression in human endometrium: sex steroid hormones regulate the expression of FLRG in cultured human endometrial stromal cells.</title>
        <authorList>
            <person name="Wang H.Q."/>
            <person name="Takebayashi K."/>
            <person name="Tsuchida K."/>
            <person name="Nishimura M."/>
            <person name="Noda Y."/>
        </authorList>
    </citation>
    <scope>SUBCELLULAR LOCATION</scope>
</reference>
<reference key="11">
    <citation type="journal article" date="2004" name="Mol. Cell. Endocrinol.">
        <title>FLRG, member of the follistatin family, a new player in hematopoiesis.</title>
        <authorList>
            <person name="Maguer-Satta V."/>
            <person name="Rimokh R."/>
        </authorList>
    </citation>
    <scope>FUNCTION IN HEMATOPOIESIS</scope>
</reference>
<reference key="12">
    <citation type="journal article" date="2005" name="Biol. Cell">
        <title>FLRG, a new ADAM12-associated protein, modulates osteoclast differentiation.</title>
        <authorList>
            <person name="Bartholin L."/>
            <person name="Destaing O."/>
            <person name="Forissier S."/>
            <person name="Martel S."/>
            <person name="Maguer-Satta V."/>
            <person name="Jurdic P."/>
            <person name="Rimokh R."/>
        </authorList>
    </citation>
    <scope>FUNCTION IN OSTEOCLAST DIFFERENTIATION</scope>
    <scope>INTERACTION WITH ADAM8 AND ADAM12</scope>
</reference>
<reference key="13">
    <citation type="journal article" date="2005" name="Endocrinology">
        <title>Differential biosynthesis and intracellular transport of follistatin isoforms and follistatin-like-3.</title>
        <authorList>
            <person name="Saito S."/>
            <person name="Sidis Y."/>
            <person name="Mukherjee A."/>
            <person name="Xia Y."/>
            <person name="Schneyer A."/>
        </authorList>
    </citation>
    <scope>SUBCELLULAR LOCATION</scope>
    <scope>ALTERNATIVE INITIATION</scope>
    <scope>MUTAGENESIS OF MET-27</scope>
</reference>
<reference key="14">
    <citation type="journal article" date="2006" name="Exp. Cell Res.">
        <title>A novel role for fibronectin type I domain in the regulation of human hematopoietic cell adhesiveness through binding to follistatin domains of FLRG and follistatin.</title>
        <authorList>
            <person name="Maguer-Satta V."/>
            <person name="Forissier S."/>
            <person name="Bartholin L."/>
            <person name="Martel S."/>
            <person name="Jeanpierre S."/>
            <person name="Bachelard E."/>
            <person name="Rimokh R."/>
        </authorList>
    </citation>
    <scope>FUNCTION IN HEMATOPOIESIS</scope>
    <scope>INTERACTION WITH FN1</scope>
</reference>
<reference key="15">
    <citation type="journal article" date="2007" name="Biol. Cell">
        <title>AF10-dependent transcription is enhanced by its interaction with FLRG.</title>
        <authorList>
            <person name="Forissier S."/>
            <person name="Razanajaona D."/>
            <person name="Ay A.S."/>
            <person name="Martel S."/>
            <person name="Bartholin L."/>
            <person name="Rimokh R."/>
        </authorList>
    </citation>
    <scope>FUNCTION IN TRANSCRIPTION REGULATION</scope>
    <scope>INTERACTION WITH MLLT10</scope>
</reference>
<reference key="16">
    <citation type="journal article" date="2007" name="J. Med. Invest.">
        <title>Characterization of follistatin-related gene as a negative regulatory factor for activin family members during mouse heart development.</title>
        <authorList>
            <person name="Takehara-Kasamatsu Y."/>
            <person name="Tsuchida K."/>
            <person name="Nakatani M."/>
            <person name="Murakami T."/>
            <person name="Kurisaki A."/>
            <person name="Hashimoto O."/>
            <person name="Ohuchi H."/>
            <person name="Kurose H."/>
            <person name="Mori K."/>
            <person name="Kagami S."/>
            <person name="Noji S."/>
            <person name="Sugino H."/>
        </authorList>
    </citation>
    <scope>FUNCTION</scope>
    <scope>INTERACTION WITH MSTN</scope>
</reference>
<reference key="17">
    <citation type="journal article" date="2015" name="Cell">
        <title>A single kinase generates the majority of the secreted phosphoproteome.</title>
        <authorList>
            <person name="Tagliabracci V.S."/>
            <person name="Wiley S.E."/>
            <person name="Guo X."/>
            <person name="Kinch L.N."/>
            <person name="Durrant E."/>
            <person name="Wen J."/>
            <person name="Xiao J."/>
            <person name="Cui J."/>
            <person name="Nguyen K.B."/>
            <person name="Engel J.L."/>
            <person name="Coon J.J."/>
            <person name="Grishin N."/>
            <person name="Pinna L.A."/>
            <person name="Pagliarini D.J."/>
            <person name="Dixon J.E."/>
        </authorList>
    </citation>
    <scope>PHOSPHORYLATION AT SER-255</scope>
</reference>
<reference key="18">
    <citation type="journal article" date="2008" name="J. Biol. Chem.">
        <title>The structure of FSTL3.activin A complex. Differential binding of N-terminal domains influences follistatin-type antagonist specificity.</title>
        <authorList>
            <person name="Stamler R."/>
            <person name="Keutmann H.T."/>
            <person name="Sidis Y."/>
            <person name="Kattamuri C."/>
            <person name="Schneyer A."/>
            <person name="Thompson T.B."/>
        </authorList>
    </citation>
    <scope>X-RAY CRYSTALLOGRAPHY (2.48 ANGSTROMS) OF 27-263 IN COMPLEX WITH INHBA</scope>
    <scope>DISULFIDE BONDS</scope>
    <scope>GLYCOSYLATION AT ASN-215</scope>
</reference>
<reference key="19">
    <citation type="journal article" date="2012" name="J. Biol. Chem.">
        <title>Structure of myostatin.follistatin-like 3: N-terminal domains of follistatin-type molecules exhibit alternate modes of binding.</title>
        <authorList>
            <person name="Cash J.N."/>
            <person name="Angerman E.B."/>
            <person name="Kattamuri C."/>
            <person name="Nolan K."/>
            <person name="Zhao H."/>
            <person name="Sidis Y."/>
            <person name="Keutmann H.T."/>
            <person name="Thompson T.B."/>
        </authorList>
    </citation>
    <scope>X-RAY CRYSTALLOGRAPHY (2.4 ANGSTROMS) OF 36-244 IN COMPLEX WITH MOUSE GDF8</scope>
    <scope>GLYCOSYLATION AT ASN-73</scope>
    <scope>DISULFIDE BONDS</scope>
</reference>
<protein>
    <recommendedName>
        <fullName>Follistatin-related protein 3</fullName>
    </recommendedName>
    <alternativeName>
        <fullName>Follistatin-like protein 3</fullName>
    </alternativeName>
    <alternativeName>
        <fullName>Follistatin-related gene protein</fullName>
    </alternativeName>
</protein>